<accession>Q2YXZ5</accession>
<evidence type="ECO:0000250" key="1"/>
<evidence type="ECO:0000305" key="2"/>
<comment type="function">
    <text evidence="1">Catalyzes the formation of the pentaglycine interpeptide bridge, which is characteristic of the S.aureus peptidoglycan. Adds glycines 2 and 3 of the pentaglycine bridge, using glycyl-tRNA(Gly) as donor (By similarity).</text>
</comment>
<comment type="catalytic activity">
    <reaction>
        <text>beta-D-GlcNAc-(1-&gt;4)-Mur2Ac(oyl-L-Ala-D-isoglutaminyl-L-Lys-(N(6)-Gly)-D-Ala-D-Ala)-di-trans,octa-cis-undecaprenyl diphosphate + 2 glycyl-tRNA(Gly) = MurNAc-L-Ala-D-isoglutaminyl-L-Lys-(N(6)-tri-Gly)-D-Ala-D-Ala-diphospho-di-trans,octa-cis-undecaprenyl-GlcNAc + 2 tRNA(Gly) + 2 H(+)</text>
        <dbReference type="Rhea" id="RHEA:30439"/>
        <dbReference type="Rhea" id="RHEA-COMP:9664"/>
        <dbReference type="Rhea" id="RHEA-COMP:9683"/>
        <dbReference type="ChEBI" id="CHEBI:15378"/>
        <dbReference type="ChEBI" id="CHEBI:62234"/>
        <dbReference type="ChEBI" id="CHEBI:62235"/>
        <dbReference type="ChEBI" id="CHEBI:78442"/>
        <dbReference type="ChEBI" id="CHEBI:78522"/>
        <dbReference type="EC" id="2.3.2.17"/>
    </reaction>
</comment>
<comment type="subunit">
    <text evidence="1">Homodimer. Interacts with FemB (By similarity).</text>
</comment>
<comment type="subcellular location">
    <subcellularLocation>
        <location evidence="1">Cytoplasm</location>
    </subcellularLocation>
</comment>
<comment type="similarity">
    <text evidence="2">Belongs to the FemABX family.</text>
</comment>
<comment type="sequence caution" evidence="2">
    <conflict type="erroneous initiation">
        <sequence resource="EMBL-CDS" id="CAI80918"/>
    </conflict>
</comment>
<name>FEMA_STAAB</name>
<reference key="1">
    <citation type="journal article" date="2007" name="PLoS ONE">
        <title>Molecular correlates of host specialization in Staphylococcus aureus.</title>
        <authorList>
            <person name="Herron-Olson L."/>
            <person name="Fitzgerald J.R."/>
            <person name="Musser J.M."/>
            <person name="Kapur V."/>
        </authorList>
    </citation>
    <scope>NUCLEOTIDE SEQUENCE [LARGE SCALE GENOMIC DNA]</scope>
    <source>
        <strain>bovine RF122 / ET3-1</strain>
    </source>
</reference>
<dbReference type="EC" id="2.3.2.17"/>
<dbReference type="EMBL" id="AJ938182">
    <property type="protein sequence ID" value="CAI80918.1"/>
    <property type="status" value="ALT_INIT"/>
    <property type="molecule type" value="Genomic_DNA"/>
</dbReference>
<dbReference type="RefSeq" id="WP_000673320.1">
    <property type="nucleotide sequence ID" value="NC_007622.1"/>
</dbReference>
<dbReference type="SMR" id="Q2YXZ5"/>
<dbReference type="KEGG" id="sab:SAB1229"/>
<dbReference type="HOGENOM" id="CLU_048411_1_0_9"/>
<dbReference type="GO" id="GO:0005737">
    <property type="term" value="C:cytoplasm"/>
    <property type="evidence" value="ECO:0007669"/>
    <property type="project" value="UniProtKB-SubCell"/>
</dbReference>
<dbReference type="GO" id="GO:0016755">
    <property type="term" value="F:aminoacyltransferase activity"/>
    <property type="evidence" value="ECO:0007669"/>
    <property type="project" value="InterPro"/>
</dbReference>
<dbReference type="GO" id="GO:0000166">
    <property type="term" value="F:nucleotide binding"/>
    <property type="evidence" value="ECO:0007669"/>
    <property type="project" value="InterPro"/>
</dbReference>
<dbReference type="GO" id="GO:0071555">
    <property type="term" value="P:cell wall organization"/>
    <property type="evidence" value="ECO:0007669"/>
    <property type="project" value="UniProtKB-KW"/>
</dbReference>
<dbReference type="GO" id="GO:0009252">
    <property type="term" value="P:peptidoglycan biosynthetic process"/>
    <property type="evidence" value="ECO:0007669"/>
    <property type="project" value="UniProtKB-KW"/>
</dbReference>
<dbReference type="GO" id="GO:0008360">
    <property type="term" value="P:regulation of cell shape"/>
    <property type="evidence" value="ECO:0007669"/>
    <property type="project" value="UniProtKB-KW"/>
</dbReference>
<dbReference type="Gene3D" id="1.20.58.90">
    <property type="match status" value="1"/>
</dbReference>
<dbReference type="Gene3D" id="3.40.630.30">
    <property type="match status" value="2"/>
</dbReference>
<dbReference type="InterPro" id="IPR016181">
    <property type="entry name" value="Acyl_CoA_acyltransferase"/>
</dbReference>
<dbReference type="InterPro" id="IPR003447">
    <property type="entry name" value="FEMABX"/>
</dbReference>
<dbReference type="InterPro" id="IPR050644">
    <property type="entry name" value="PG_Glycine_Bridge_Synth"/>
</dbReference>
<dbReference type="InterPro" id="IPR010978">
    <property type="entry name" value="tRNA-bd_arm"/>
</dbReference>
<dbReference type="PANTHER" id="PTHR36174:SF2">
    <property type="entry name" value="AMINOACYLTRANSFERASE FEMA"/>
    <property type="match status" value="1"/>
</dbReference>
<dbReference type="PANTHER" id="PTHR36174">
    <property type="entry name" value="LIPID II:GLYCINE GLYCYLTRANSFERASE"/>
    <property type="match status" value="1"/>
</dbReference>
<dbReference type="Pfam" id="PF02388">
    <property type="entry name" value="FemAB"/>
    <property type="match status" value="1"/>
</dbReference>
<dbReference type="SUPFAM" id="SSF55729">
    <property type="entry name" value="Acyl-CoA N-acyltransferases (Nat)"/>
    <property type="match status" value="2"/>
</dbReference>
<dbReference type="SUPFAM" id="SSF46589">
    <property type="entry name" value="tRNA-binding arm"/>
    <property type="match status" value="1"/>
</dbReference>
<dbReference type="PROSITE" id="PS51191">
    <property type="entry name" value="FEMABX"/>
    <property type="match status" value="1"/>
</dbReference>
<keyword id="KW-0012">Acyltransferase</keyword>
<keyword id="KW-0133">Cell shape</keyword>
<keyword id="KW-0961">Cell wall biogenesis/degradation</keyword>
<keyword id="KW-0963">Cytoplasm</keyword>
<keyword id="KW-0573">Peptidoglycan synthesis</keyword>
<keyword id="KW-0808">Transferase</keyword>
<sequence length="420" mass="49200">MKFTNLTAKEFGAFTDSMPYSHFTQTVGHYELKLAEGYETHLVGIKNNNNEVIAACLLTAVPVMKVFKYFYSNRGPVIDYENQELVHFFFNELSKYVKKHRCLYLHIDPYLPYQYLNHDGEITGNASNDWFFDKMSNLGFEHTGFHKGFDPVLQIRYHSVLDLKDKTADDIIKNMDGLRKRNTKKVKKNGVKVRYLSEEELPIFRSFMEDTSESKAFADRDDKFYYNRLKYYKDRVLVPLAYINFDEYIKELNEERDILNKDLNKALKDIEKRPENKKAHNKRDNLQQQLDANEQKIEEGKRLQEEHGNELPISAGFFFINPFEVVYYAGGTSNAFRHFAGSYAVQWEMINYALNHGIDRYNFYGVSGKFTEDAEDTGVVKFKKGYNAEIIEYVGDFIKPINKPVYAAYTALKKVKDRIF</sequence>
<proteinExistence type="inferred from homology"/>
<organism>
    <name type="scientific">Staphylococcus aureus (strain bovine RF122 / ET3-1)</name>
    <dbReference type="NCBI Taxonomy" id="273036"/>
    <lineage>
        <taxon>Bacteria</taxon>
        <taxon>Bacillati</taxon>
        <taxon>Bacillota</taxon>
        <taxon>Bacilli</taxon>
        <taxon>Bacillales</taxon>
        <taxon>Staphylococcaceae</taxon>
        <taxon>Staphylococcus</taxon>
    </lineage>
</organism>
<gene>
    <name type="primary">femA</name>
    <name type="ordered locus">SAB1229</name>
</gene>
<protein>
    <recommendedName>
        <fullName>Aminoacyltransferase FemA</fullName>
        <ecNumber>2.3.2.17</ecNumber>
    </recommendedName>
    <alternativeName>
        <fullName>Factor essential for expression of methicillin resistance A</fullName>
    </alternativeName>
    <alternativeName>
        <fullName>N-acetylmuramoyl-L-alanyl-D-glutamyl-L-lysyl-(N6-glycyl)-D-alanyl-D-alanine-diphosphoundecaprenyl-N-acetylglucosamine:glycine glycyltransferase</fullName>
    </alternativeName>
</protein>
<feature type="chain" id="PRO_0000232597" description="Aminoacyltransferase FemA">
    <location>
        <begin position="1"/>
        <end position="420"/>
    </location>
</feature>